<feature type="chain" id="PRO_0000261692" description="Large ribosomal subunit protein uL13">
    <location>
        <begin position="1"/>
        <end position="142"/>
    </location>
</feature>
<accession>Q7WFC3</accession>
<reference key="1">
    <citation type="journal article" date="2003" name="Nat. Genet.">
        <title>Comparative analysis of the genome sequences of Bordetella pertussis, Bordetella parapertussis and Bordetella bronchiseptica.</title>
        <authorList>
            <person name="Parkhill J."/>
            <person name="Sebaihia M."/>
            <person name="Preston A."/>
            <person name="Murphy L.D."/>
            <person name="Thomson N.R."/>
            <person name="Harris D.E."/>
            <person name="Holden M.T.G."/>
            <person name="Churcher C.M."/>
            <person name="Bentley S.D."/>
            <person name="Mungall K.L."/>
            <person name="Cerdeno-Tarraga A.-M."/>
            <person name="Temple L."/>
            <person name="James K.D."/>
            <person name="Harris B."/>
            <person name="Quail M.A."/>
            <person name="Achtman M."/>
            <person name="Atkin R."/>
            <person name="Baker S."/>
            <person name="Basham D."/>
            <person name="Bason N."/>
            <person name="Cherevach I."/>
            <person name="Chillingworth T."/>
            <person name="Collins M."/>
            <person name="Cronin A."/>
            <person name="Davis P."/>
            <person name="Doggett J."/>
            <person name="Feltwell T."/>
            <person name="Goble A."/>
            <person name="Hamlin N."/>
            <person name="Hauser H."/>
            <person name="Holroyd S."/>
            <person name="Jagels K."/>
            <person name="Leather S."/>
            <person name="Moule S."/>
            <person name="Norberczak H."/>
            <person name="O'Neil S."/>
            <person name="Ormond D."/>
            <person name="Price C."/>
            <person name="Rabbinowitsch E."/>
            <person name="Rutter S."/>
            <person name="Sanders M."/>
            <person name="Saunders D."/>
            <person name="Seeger K."/>
            <person name="Sharp S."/>
            <person name="Simmonds M."/>
            <person name="Skelton J."/>
            <person name="Squares R."/>
            <person name="Squares S."/>
            <person name="Stevens K."/>
            <person name="Unwin L."/>
            <person name="Whitehead S."/>
            <person name="Barrell B.G."/>
            <person name="Maskell D.J."/>
        </authorList>
    </citation>
    <scope>NUCLEOTIDE SEQUENCE [LARGE SCALE GENOMIC DNA]</scope>
    <source>
        <strain>ATCC BAA-588 / NCTC 13252 / RB50</strain>
    </source>
</reference>
<protein>
    <recommendedName>
        <fullName evidence="1">Large ribosomal subunit protein uL13</fullName>
    </recommendedName>
    <alternativeName>
        <fullName evidence="2">50S ribosomal protein L13</fullName>
    </alternativeName>
</protein>
<evidence type="ECO:0000255" key="1">
    <source>
        <dbReference type="HAMAP-Rule" id="MF_01366"/>
    </source>
</evidence>
<evidence type="ECO:0000305" key="2"/>
<gene>
    <name evidence="1" type="primary">rplM</name>
    <name type="ordered locus">BB4357</name>
</gene>
<organism>
    <name type="scientific">Bordetella bronchiseptica (strain ATCC BAA-588 / NCTC 13252 / RB50)</name>
    <name type="common">Alcaligenes bronchisepticus</name>
    <dbReference type="NCBI Taxonomy" id="257310"/>
    <lineage>
        <taxon>Bacteria</taxon>
        <taxon>Pseudomonadati</taxon>
        <taxon>Pseudomonadota</taxon>
        <taxon>Betaproteobacteria</taxon>
        <taxon>Burkholderiales</taxon>
        <taxon>Alcaligenaceae</taxon>
        <taxon>Bordetella</taxon>
    </lineage>
</organism>
<comment type="function">
    <text evidence="1">This protein is one of the early assembly proteins of the 50S ribosomal subunit, although it is not seen to bind rRNA by itself. It is important during the early stages of 50S assembly.</text>
</comment>
<comment type="subunit">
    <text evidence="1">Part of the 50S ribosomal subunit.</text>
</comment>
<comment type="similarity">
    <text evidence="1">Belongs to the universal ribosomal protein uL13 family.</text>
</comment>
<comment type="sequence caution" evidence="2">
    <conflict type="erroneous initiation">
        <sequence resource="EMBL-CDS" id="CAE34720"/>
    </conflict>
</comment>
<proteinExistence type="inferred from homology"/>
<dbReference type="EMBL" id="BX640450">
    <property type="protein sequence ID" value="CAE34720.1"/>
    <property type="status" value="ALT_INIT"/>
    <property type="molecule type" value="Genomic_DNA"/>
</dbReference>
<dbReference type="RefSeq" id="WP_010927106.1">
    <property type="nucleotide sequence ID" value="NC_002927.3"/>
</dbReference>
<dbReference type="SMR" id="Q7WFC3"/>
<dbReference type="GeneID" id="93205684"/>
<dbReference type="KEGG" id="bbr:BB4357"/>
<dbReference type="eggNOG" id="COG0102">
    <property type="taxonomic scope" value="Bacteria"/>
</dbReference>
<dbReference type="HOGENOM" id="CLU_082184_2_2_4"/>
<dbReference type="Proteomes" id="UP000001027">
    <property type="component" value="Chromosome"/>
</dbReference>
<dbReference type="GO" id="GO:0022625">
    <property type="term" value="C:cytosolic large ribosomal subunit"/>
    <property type="evidence" value="ECO:0007669"/>
    <property type="project" value="TreeGrafter"/>
</dbReference>
<dbReference type="GO" id="GO:0003729">
    <property type="term" value="F:mRNA binding"/>
    <property type="evidence" value="ECO:0007669"/>
    <property type="project" value="TreeGrafter"/>
</dbReference>
<dbReference type="GO" id="GO:0003735">
    <property type="term" value="F:structural constituent of ribosome"/>
    <property type="evidence" value="ECO:0007669"/>
    <property type="project" value="InterPro"/>
</dbReference>
<dbReference type="GO" id="GO:0017148">
    <property type="term" value="P:negative regulation of translation"/>
    <property type="evidence" value="ECO:0007669"/>
    <property type="project" value="TreeGrafter"/>
</dbReference>
<dbReference type="GO" id="GO:0006412">
    <property type="term" value="P:translation"/>
    <property type="evidence" value="ECO:0007669"/>
    <property type="project" value="UniProtKB-UniRule"/>
</dbReference>
<dbReference type="CDD" id="cd00392">
    <property type="entry name" value="Ribosomal_L13"/>
    <property type="match status" value="1"/>
</dbReference>
<dbReference type="FunFam" id="3.90.1180.10:FF:000001">
    <property type="entry name" value="50S ribosomal protein L13"/>
    <property type="match status" value="1"/>
</dbReference>
<dbReference type="Gene3D" id="3.90.1180.10">
    <property type="entry name" value="Ribosomal protein L13"/>
    <property type="match status" value="1"/>
</dbReference>
<dbReference type="HAMAP" id="MF_01366">
    <property type="entry name" value="Ribosomal_uL13"/>
    <property type="match status" value="1"/>
</dbReference>
<dbReference type="InterPro" id="IPR005822">
    <property type="entry name" value="Ribosomal_uL13"/>
</dbReference>
<dbReference type="InterPro" id="IPR005823">
    <property type="entry name" value="Ribosomal_uL13_bac-type"/>
</dbReference>
<dbReference type="InterPro" id="IPR036899">
    <property type="entry name" value="Ribosomal_uL13_sf"/>
</dbReference>
<dbReference type="NCBIfam" id="TIGR01066">
    <property type="entry name" value="rplM_bact"/>
    <property type="match status" value="1"/>
</dbReference>
<dbReference type="PANTHER" id="PTHR11545:SF2">
    <property type="entry name" value="LARGE RIBOSOMAL SUBUNIT PROTEIN UL13M"/>
    <property type="match status" value="1"/>
</dbReference>
<dbReference type="PANTHER" id="PTHR11545">
    <property type="entry name" value="RIBOSOMAL PROTEIN L13"/>
    <property type="match status" value="1"/>
</dbReference>
<dbReference type="Pfam" id="PF00572">
    <property type="entry name" value="Ribosomal_L13"/>
    <property type="match status" value="1"/>
</dbReference>
<dbReference type="PIRSF" id="PIRSF002181">
    <property type="entry name" value="Ribosomal_L13"/>
    <property type="match status" value="1"/>
</dbReference>
<dbReference type="SUPFAM" id="SSF52161">
    <property type="entry name" value="Ribosomal protein L13"/>
    <property type="match status" value="1"/>
</dbReference>
<name>RL13_BORBR</name>
<sequence>MKTFVAKPHEVKRDWFVIDAKGKVLGRVASEVAHRLRGKHKPEFTPHVDTGDYIVIINAADIVVTGNKAQDKKYFRHTTYPGGIRETNFEKMQQRFPGRAIQKAVKGMLPKGPLGYAMIKKLKVYAGAEHPHTAQQPKPLEF</sequence>
<keyword id="KW-0687">Ribonucleoprotein</keyword>
<keyword id="KW-0689">Ribosomal protein</keyword>